<gene>
    <name type="ordered locus">Rv2449c</name>
</gene>
<reference key="1">
    <citation type="journal article" date="1998" name="Nature">
        <title>Deciphering the biology of Mycobacterium tuberculosis from the complete genome sequence.</title>
        <authorList>
            <person name="Cole S.T."/>
            <person name="Brosch R."/>
            <person name="Parkhill J."/>
            <person name="Garnier T."/>
            <person name="Churcher C.M."/>
            <person name="Harris D.E."/>
            <person name="Gordon S.V."/>
            <person name="Eiglmeier K."/>
            <person name="Gas S."/>
            <person name="Barry C.E. III"/>
            <person name="Tekaia F."/>
            <person name="Badcock K."/>
            <person name="Basham D."/>
            <person name="Brown D."/>
            <person name="Chillingworth T."/>
            <person name="Connor R."/>
            <person name="Davies R.M."/>
            <person name="Devlin K."/>
            <person name="Feltwell T."/>
            <person name="Gentles S."/>
            <person name="Hamlin N."/>
            <person name="Holroyd S."/>
            <person name="Hornsby T."/>
            <person name="Jagels K."/>
            <person name="Krogh A."/>
            <person name="McLean J."/>
            <person name="Moule S."/>
            <person name="Murphy L.D."/>
            <person name="Oliver S."/>
            <person name="Osborne J."/>
            <person name="Quail M.A."/>
            <person name="Rajandream M.A."/>
            <person name="Rogers J."/>
            <person name="Rutter S."/>
            <person name="Seeger K."/>
            <person name="Skelton S."/>
            <person name="Squares S."/>
            <person name="Squares R."/>
            <person name="Sulston J.E."/>
            <person name="Taylor K."/>
            <person name="Whitehead S."/>
            <person name="Barrell B.G."/>
        </authorList>
    </citation>
    <scope>NUCLEOTIDE SEQUENCE [LARGE SCALE GENOMIC DNA]</scope>
    <source>
        <strain>ATCC 25618 / H37Rv</strain>
    </source>
</reference>
<reference key="2">
    <citation type="journal article" date="2010" name="PLoS ONE">
        <title>Prokaryotic ubiquitin-like protein (Pup) proteome of Mycobacterium tuberculosis.</title>
        <authorList>
            <person name="Festa R.A."/>
            <person name="McAllister F."/>
            <person name="Pearce M.J."/>
            <person name="Mintseris J."/>
            <person name="Burns K.E."/>
            <person name="Gygi S.P."/>
            <person name="Darwin K.H."/>
        </authorList>
    </citation>
    <scope>PUPYLATION AT LYS-127</scope>
    <scope>IDENTIFICATION BY MASS SPECTROMETRY</scope>
    <source>
        <strain>ATCC 25618 / H37Rv</strain>
    </source>
</reference>
<reference key="3">
    <citation type="journal article" date="2011" name="Mol. Cell. Proteomics">
        <title>Proteogenomic analysis of Mycobacterium tuberculosis by high resolution mass spectrometry.</title>
        <authorList>
            <person name="Kelkar D.S."/>
            <person name="Kumar D."/>
            <person name="Kumar P."/>
            <person name="Balakrishnan L."/>
            <person name="Muthusamy B."/>
            <person name="Yadav A.K."/>
            <person name="Shrivastava P."/>
            <person name="Marimuthu A."/>
            <person name="Anand S."/>
            <person name="Sundaram H."/>
            <person name="Kingsbury R."/>
            <person name="Harsha H.C."/>
            <person name="Nair B."/>
            <person name="Prasad T.S."/>
            <person name="Chauhan D.S."/>
            <person name="Katoch K."/>
            <person name="Katoch V.M."/>
            <person name="Kumar P."/>
            <person name="Chaerkady R."/>
            <person name="Ramachandran S."/>
            <person name="Dash D."/>
            <person name="Pandey A."/>
        </authorList>
    </citation>
    <scope>IDENTIFICATION BY MASS SPECTROMETRY [LARGE SCALE ANALYSIS]</scope>
    <source>
        <strain>ATCC 25618 / H37Rv</strain>
    </source>
</reference>
<sequence>MTATPREFDIVLYGATGFVGKLTAEYLARAGGDARIALAGRSTQRVLAVREALGESAQTWPILTADASLPSTLQAMAARAQVVVTTVGPYTRYGLPLVAACAAAGTDYADLTGEPMFMRNSIDLYHKQAADTGARIVHACGFDSVPSDLSVYALYHAAREDGAGELTDTNCVVRSFKGGFSGGTIASMLEVLSTASNDPDARRQLSDPYMLSPDRGAEPELGPQPDLPSRRGRRLAPELAGVWTAGFIMAPTNTRIVRRSNALLDWAYGRRFRYSETMSVGSTVLAPVVSVVGGGVGNAMFGLASRYIRLLPRGLVKRVVPKPGTGPSAAARERGYYRIETYTTTTTGARYLARMAQDGDPGYKATSVLLGECGLALALDRDKLSDMRGVLTPAAAMGDALLERLPAAGVSLQTTRLAS</sequence>
<evidence type="ECO:0000255" key="1"/>
<evidence type="ECO:0000256" key="2">
    <source>
        <dbReference type="SAM" id="MobiDB-lite"/>
    </source>
</evidence>
<evidence type="ECO:0000269" key="3">
    <source>
    </source>
</evidence>
<evidence type="ECO:0000305" key="4"/>
<name>Y2449_MYCTU</name>
<comment type="subcellular location">
    <subcellularLocation>
        <location evidence="4">Cell membrane</location>
        <topology evidence="4">Single-pass membrane protein</topology>
    </subcellularLocation>
</comment>
<comment type="similarity">
    <text evidence="4">Belongs to the saccharopine dehydrogenase family. Enoyl reductase subfamily.</text>
</comment>
<accession>O53176</accession>
<accession>L0TCK0</accession>
<proteinExistence type="evidence at protein level"/>
<keyword id="KW-1003">Cell membrane</keyword>
<keyword id="KW-1017">Isopeptide bond</keyword>
<keyword id="KW-0472">Membrane</keyword>
<keyword id="KW-0560">Oxidoreductase</keyword>
<keyword id="KW-1185">Reference proteome</keyword>
<keyword id="KW-0812">Transmembrane</keyword>
<keyword id="KW-1133">Transmembrane helix</keyword>
<keyword id="KW-0832">Ubl conjugation</keyword>
<dbReference type="EC" id="1.3.1.-"/>
<dbReference type="EMBL" id="AL123456">
    <property type="protein sequence ID" value="CCP45242.1"/>
    <property type="molecule type" value="Genomic_DNA"/>
</dbReference>
<dbReference type="PIR" id="H70863">
    <property type="entry name" value="H70863"/>
</dbReference>
<dbReference type="RefSeq" id="NP_216965.1">
    <property type="nucleotide sequence ID" value="NC_000962.3"/>
</dbReference>
<dbReference type="RefSeq" id="WP_003412609.1">
    <property type="nucleotide sequence ID" value="NZ_NVQJ01000024.1"/>
</dbReference>
<dbReference type="SMR" id="O53176"/>
<dbReference type="FunCoup" id="O53176">
    <property type="interactions" value="227"/>
</dbReference>
<dbReference type="STRING" id="83332.Rv2449c"/>
<dbReference type="PaxDb" id="83332-Rv2449c"/>
<dbReference type="DNASU" id="885894"/>
<dbReference type="GeneID" id="885894"/>
<dbReference type="KEGG" id="mtu:Rv2449c"/>
<dbReference type="KEGG" id="mtv:RVBD_2449c"/>
<dbReference type="TubercuList" id="Rv2449c"/>
<dbReference type="eggNOG" id="COG3268">
    <property type="taxonomic scope" value="Bacteria"/>
</dbReference>
<dbReference type="InParanoid" id="O53176"/>
<dbReference type="OrthoDB" id="4369409at2"/>
<dbReference type="PhylomeDB" id="O53176"/>
<dbReference type="Proteomes" id="UP000001584">
    <property type="component" value="Chromosome"/>
</dbReference>
<dbReference type="GO" id="GO:0005886">
    <property type="term" value="C:plasma membrane"/>
    <property type="evidence" value="ECO:0007005"/>
    <property type="project" value="MTBBASE"/>
</dbReference>
<dbReference type="GO" id="GO:0016491">
    <property type="term" value="F:oxidoreductase activity"/>
    <property type="evidence" value="ECO:0007669"/>
    <property type="project" value="UniProtKB-KW"/>
</dbReference>
<dbReference type="GO" id="GO:0009247">
    <property type="term" value="P:glycolipid biosynthetic process"/>
    <property type="evidence" value="ECO:0000318"/>
    <property type="project" value="GO_Central"/>
</dbReference>
<dbReference type="FunFam" id="3.40.50.720:FF:000413">
    <property type="entry name" value="Trans-acting enoyl reductase"/>
    <property type="match status" value="1"/>
</dbReference>
<dbReference type="Gene3D" id="3.40.50.720">
    <property type="entry name" value="NAD(P)-binding Rossmann-like Domain"/>
    <property type="match status" value="1"/>
</dbReference>
<dbReference type="InterPro" id="IPR036291">
    <property type="entry name" value="NAD(P)-bd_dom_sf"/>
</dbReference>
<dbReference type="InterPro" id="IPR051276">
    <property type="entry name" value="Saccharopine_DH-like_oxidrdct"/>
</dbReference>
<dbReference type="InterPro" id="IPR005097">
    <property type="entry name" value="Sacchrp_dh_NADP-bd"/>
</dbReference>
<dbReference type="PANTHER" id="PTHR12286">
    <property type="entry name" value="SACCHAROPINE DEHYDROGENASE-LIKE OXIDOREDUCTASE"/>
    <property type="match status" value="1"/>
</dbReference>
<dbReference type="PANTHER" id="PTHR12286:SF5">
    <property type="entry name" value="SACCHAROPINE DEHYDROGENASE-LIKE OXIDOREDUCTASE"/>
    <property type="match status" value="1"/>
</dbReference>
<dbReference type="Pfam" id="PF03435">
    <property type="entry name" value="Sacchrp_dh_NADP"/>
    <property type="match status" value="1"/>
</dbReference>
<dbReference type="SUPFAM" id="SSF51735">
    <property type="entry name" value="NAD(P)-binding Rossmann-fold domains"/>
    <property type="match status" value="1"/>
</dbReference>
<feature type="chain" id="PRO_0000396094" description="Putative trans-acting enoyl reductase Rv2449c">
    <location>
        <begin position="1"/>
        <end position="419"/>
    </location>
</feature>
<feature type="transmembrane region" description="Helical" evidence="1">
    <location>
        <begin position="284"/>
        <end position="304"/>
    </location>
</feature>
<feature type="region of interest" description="Disordered" evidence="2">
    <location>
        <begin position="197"/>
        <end position="232"/>
    </location>
</feature>
<feature type="cross-link" description="Isoglutamyl lysine isopeptide (Lys-Gln) (interchain with Q-Cter in protein Pup)" evidence="3">
    <location>
        <position position="127"/>
    </location>
</feature>
<organism>
    <name type="scientific">Mycobacterium tuberculosis (strain ATCC 25618 / H37Rv)</name>
    <dbReference type="NCBI Taxonomy" id="83332"/>
    <lineage>
        <taxon>Bacteria</taxon>
        <taxon>Bacillati</taxon>
        <taxon>Actinomycetota</taxon>
        <taxon>Actinomycetes</taxon>
        <taxon>Mycobacteriales</taxon>
        <taxon>Mycobacteriaceae</taxon>
        <taxon>Mycobacterium</taxon>
        <taxon>Mycobacterium tuberculosis complex</taxon>
    </lineage>
</organism>
<protein>
    <recommendedName>
        <fullName>Putative trans-acting enoyl reductase Rv2449c</fullName>
        <ecNumber>1.3.1.-</ecNumber>
    </recommendedName>
</protein>